<sequence length="564" mass="63622">MVRNSSDEEEDHRNLIPQNDTRDNDLNLRPDARTVNMANGGGRSPRSALQIDEILSRARNRWKISVNKRYVVAAVSLTLFVGLLFLFTDTRTFFSSFKLDPMSSRVKESELQALNLLRQQQLALVSLLNRTNFNSSNAISSSVVIDNVKAALLKQISVNKEIEEVLLSPHRTGNYSITASGSDSFTGSYNADICRKVDQKLLDRKTIEWKPRPDKFLFAICLSGQMSNHLICLEKHMFFAALLDRVLVIPSSKFDYQYDKVIDIERINTCLGRTVVISFDQFKEIDKKNNAHIDRFICYVSSPQPCYVDEDHIKKLKGLGVSIGGKLEAPWSEDIKKPTKRTSQEVVEKFKSDDGVIAIGDVFYADMEQDLVMQPGGPINHKCKTLIEPSRLILVTAQRFIQTFLGKNFISLHLRRHGFLKFCNAKSPSCFYPIPQAADCISRMVERANAPVIYLSTDAAESETGLLQSLVVVDGKVVPLVKRPPQNSAEKWDSLLYRHGIEDDSQVYAMLDKTICAMSSVFIGASGSTFTEDILRLRKDWGTSSMCDEYLCRGEEPNFIAENE</sequence>
<reference key="1">
    <citation type="journal article" date="2014" name="Plant J.">
        <title>The plant glycosyltransferase clone collection for functional genomics.</title>
        <authorList>
            <person name="Lao J."/>
            <person name="Oikawa A."/>
            <person name="Bromley J.R."/>
            <person name="McInerney P."/>
            <person name="Suttangkakul A."/>
            <person name="Smith-Moritz A.M."/>
            <person name="Plahar H."/>
            <person name="Chiu T.-Y."/>
            <person name="Gonzalez Fernandez-Nino S.M.G."/>
            <person name="Ebert B."/>
            <person name="Yang F."/>
            <person name="Christiansen K.M."/>
            <person name="Hansen S.F."/>
            <person name="Stonebloom S."/>
            <person name="Adams P.D."/>
            <person name="Ronald P.C."/>
            <person name="Hillson N.J."/>
            <person name="Hadi M.Z."/>
            <person name="Vega-Sanchez M.E."/>
            <person name="Loque D."/>
            <person name="Scheller H.V."/>
            <person name="Heazlewood J.L."/>
        </authorList>
    </citation>
    <scope>NUCLEOTIDE SEQUENCE [MRNA]</scope>
    <scope>WEB RESOURCE</scope>
    <source>
        <strain>cv. Columbia</strain>
    </source>
</reference>
<reference key="2">
    <citation type="journal article" date="2000" name="Nature">
        <title>Sequence and analysis of chromosome 1 of the plant Arabidopsis thaliana.</title>
        <authorList>
            <person name="Theologis A."/>
            <person name="Ecker J.R."/>
            <person name="Palm C.J."/>
            <person name="Federspiel N.A."/>
            <person name="Kaul S."/>
            <person name="White O."/>
            <person name="Alonso J."/>
            <person name="Altafi H."/>
            <person name="Araujo R."/>
            <person name="Bowman C.L."/>
            <person name="Brooks S.Y."/>
            <person name="Buehler E."/>
            <person name="Chan A."/>
            <person name="Chao Q."/>
            <person name="Chen H."/>
            <person name="Cheuk R.F."/>
            <person name="Chin C.W."/>
            <person name="Chung M.K."/>
            <person name="Conn L."/>
            <person name="Conway A.B."/>
            <person name="Conway A.R."/>
            <person name="Creasy T.H."/>
            <person name="Dewar K."/>
            <person name="Dunn P."/>
            <person name="Etgu P."/>
            <person name="Feldblyum T.V."/>
            <person name="Feng J.-D."/>
            <person name="Fong B."/>
            <person name="Fujii C.Y."/>
            <person name="Gill J.E."/>
            <person name="Goldsmith A.D."/>
            <person name="Haas B."/>
            <person name="Hansen N.F."/>
            <person name="Hughes B."/>
            <person name="Huizar L."/>
            <person name="Hunter J.L."/>
            <person name="Jenkins J."/>
            <person name="Johnson-Hopson C."/>
            <person name="Khan S."/>
            <person name="Khaykin E."/>
            <person name="Kim C.J."/>
            <person name="Koo H.L."/>
            <person name="Kremenetskaia I."/>
            <person name="Kurtz D.B."/>
            <person name="Kwan A."/>
            <person name="Lam B."/>
            <person name="Langin-Hooper S."/>
            <person name="Lee A."/>
            <person name="Lee J.M."/>
            <person name="Lenz C.A."/>
            <person name="Li J.H."/>
            <person name="Li Y.-P."/>
            <person name="Lin X."/>
            <person name="Liu S.X."/>
            <person name="Liu Z.A."/>
            <person name="Luros J.S."/>
            <person name="Maiti R."/>
            <person name="Marziali A."/>
            <person name="Militscher J."/>
            <person name="Miranda M."/>
            <person name="Nguyen M."/>
            <person name="Nierman W.C."/>
            <person name="Osborne B.I."/>
            <person name="Pai G."/>
            <person name="Peterson J."/>
            <person name="Pham P.K."/>
            <person name="Rizzo M."/>
            <person name="Rooney T."/>
            <person name="Rowley D."/>
            <person name="Sakano H."/>
            <person name="Salzberg S.L."/>
            <person name="Schwartz J.R."/>
            <person name="Shinn P."/>
            <person name="Southwick A.M."/>
            <person name="Sun H."/>
            <person name="Tallon L.J."/>
            <person name="Tambunga G."/>
            <person name="Toriumi M.J."/>
            <person name="Town C.D."/>
            <person name="Utterback T."/>
            <person name="Van Aken S."/>
            <person name="Vaysberg M."/>
            <person name="Vysotskaia V.S."/>
            <person name="Walker M."/>
            <person name="Wu D."/>
            <person name="Yu G."/>
            <person name="Fraser C.M."/>
            <person name="Venter J.C."/>
            <person name="Davis R.W."/>
        </authorList>
    </citation>
    <scope>NUCLEOTIDE SEQUENCE [LARGE SCALE GENOMIC DNA]</scope>
    <source>
        <strain>cv. Columbia</strain>
    </source>
</reference>
<reference key="3">
    <citation type="journal article" date="2017" name="Plant J.">
        <title>Araport11: a complete reannotation of the Arabidopsis thaliana reference genome.</title>
        <authorList>
            <person name="Cheng C.Y."/>
            <person name="Krishnakumar V."/>
            <person name="Chan A.P."/>
            <person name="Thibaud-Nissen F."/>
            <person name="Schobel S."/>
            <person name="Town C.D."/>
        </authorList>
    </citation>
    <scope>GENOME REANNOTATION</scope>
    <source>
        <strain>cv. Columbia</strain>
    </source>
</reference>
<reference key="4">
    <citation type="journal article" date="2003" name="Science">
        <title>Empirical analysis of transcriptional activity in the Arabidopsis genome.</title>
        <authorList>
            <person name="Yamada K."/>
            <person name="Lim J."/>
            <person name="Dale J.M."/>
            <person name="Chen H."/>
            <person name="Shinn P."/>
            <person name="Palm C.J."/>
            <person name="Southwick A.M."/>
            <person name="Wu H.C."/>
            <person name="Kim C.J."/>
            <person name="Nguyen M."/>
            <person name="Pham P.K."/>
            <person name="Cheuk R.F."/>
            <person name="Karlin-Newmann G."/>
            <person name="Liu S.X."/>
            <person name="Lam B."/>
            <person name="Sakano H."/>
            <person name="Wu T."/>
            <person name="Yu G."/>
            <person name="Miranda M."/>
            <person name="Quach H.L."/>
            <person name="Tripp M."/>
            <person name="Chang C.H."/>
            <person name="Lee J.M."/>
            <person name="Toriumi M.J."/>
            <person name="Chan M.M."/>
            <person name="Tang C.C."/>
            <person name="Onodera C.S."/>
            <person name="Deng J.M."/>
            <person name="Akiyama K."/>
            <person name="Ansari Y."/>
            <person name="Arakawa T."/>
            <person name="Banh J."/>
            <person name="Banno F."/>
            <person name="Bowser L."/>
            <person name="Brooks S.Y."/>
            <person name="Carninci P."/>
            <person name="Chao Q."/>
            <person name="Choy N."/>
            <person name="Enju A."/>
            <person name="Goldsmith A.D."/>
            <person name="Gurjal M."/>
            <person name="Hansen N.F."/>
            <person name="Hayashizaki Y."/>
            <person name="Johnson-Hopson C."/>
            <person name="Hsuan V.W."/>
            <person name="Iida K."/>
            <person name="Karnes M."/>
            <person name="Khan S."/>
            <person name="Koesema E."/>
            <person name="Ishida J."/>
            <person name="Jiang P.X."/>
            <person name="Jones T."/>
            <person name="Kawai J."/>
            <person name="Kamiya A."/>
            <person name="Meyers C."/>
            <person name="Nakajima M."/>
            <person name="Narusaka M."/>
            <person name="Seki M."/>
            <person name="Sakurai T."/>
            <person name="Satou M."/>
            <person name="Tamse R."/>
            <person name="Vaysberg M."/>
            <person name="Wallender E.K."/>
            <person name="Wong C."/>
            <person name="Yamamura Y."/>
            <person name="Yuan S."/>
            <person name="Shinozaki K."/>
            <person name="Davis R.W."/>
            <person name="Theologis A."/>
            <person name="Ecker J.R."/>
        </authorList>
    </citation>
    <scope>NUCLEOTIDE SEQUENCE [LARGE SCALE MRNA]</scope>
    <source>
        <strain>cv. Columbia</strain>
    </source>
</reference>
<reference key="5">
    <citation type="journal article" date="2012" name="Front. Plant Sci.">
        <title>Plant glycosyltransferases beyond CAZy: a perspective on DUF families.</title>
        <authorList>
            <person name="Hansen S.F."/>
            <person name="Harholt J."/>
            <person name="Oikawa A."/>
            <person name="Scheller H.V."/>
        </authorList>
    </citation>
    <scope>REVIEW</scope>
</reference>
<reference key="6">
    <citation type="journal article" date="2012" name="PLoS ONE">
        <title>Identification of putative rhamnogalacturonan-II specific glycosyltransferases in Arabidopsis using a combination of bioinformatics approaches.</title>
        <authorList>
            <person name="Voxeur A."/>
            <person name="Andre A."/>
            <person name="Breton C."/>
            <person name="Lerouge P."/>
        </authorList>
    </citation>
    <scope>GENE FAMILY</scope>
</reference>
<reference key="7">
    <citation type="journal article" date="2013" name="Plant J.">
        <title>Identification of an additional protein involved in mannan biosynthesis.</title>
        <authorList>
            <person name="Wang Y."/>
            <person name="Mortimer J.C."/>
            <person name="Davis J."/>
            <person name="Dupree P."/>
            <person name="Keegstra K."/>
        </authorList>
    </citation>
    <scope>GENE FAMILY</scope>
</reference>
<feature type="chain" id="PRO_0000442068" description="O-fucosyltransferase 5">
    <location>
        <begin position="1"/>
        <end position="564"/>
    </location>
</feature>
<feature type="transmembrane region" description="Helical; Signal-anchor for type II membrane protein" evidence="6">
    <location>
        <begin position="70"/>
        <end position="90"/>
    </location>
</feature>
<feature type="region of interest" description="Disordered" evidence="4">
    <location>
        <begin position="1"/>
        <end position="28"/>
    </location>
</feature>
<feature type="binding site" evidence="1">
    <location>
        <begin position="413"/>
        <end position="415"/>
    </location>
    <ligand>
        <name>substrate</name>
    </ligand>
</feature>
<feature type="binding site" evidence="1">
    <location>
        <begin position="529"/>
        <end position="530"/>
    </location>
    <ligand>
        <name>substrate</name>
    </ligand>
</feature>
<feature type="glycosylation site" description="N-linked (GlcNAc...) asparagine" evidence="3">
    <location>
        <position position="129"/>
    </location>
</feature>
<feature type="glycosylation site" description="N-linked (GlcNAc...) asparagine" evidence="3">
    <location>
        <position position="134"/>
    </location>
</feature>
<feature type="glycosylation site" description="N-linked (GlcNAc...) asparagine" evidence="3">
    <location>
        <position position="174"/>
    </location>
</feature>
<protein>
    <recommendedName>
        <fullName evidence="6">O-fucosyltransferase 5</fullName>
        <shortName evidence="6">O-FucT-5</shortName>
        <ecNumber evidence="6">2.4.1.-</ecNumber>
    </recommendedName>
    <alternativeName>
        <fullName evidence="6">O-fucosyltransferase family protein</fullName>
    </alternativeName>
</protein>
<comment type="pathway">
    <text evidence="6">Glycan metabolism.</text>
</comment>
<comment type="subcellular location">
    <subcellularLocation>
        <location evidence="2">Membrane</location>
        <topology evidence="6">Single-pass type II membrane protein</topology>
    </subcellularLocation>
</comment>
<comment type="similarity">
    <text evidence="6">Belongs to the glycosyltransferase GT106 family.</text>
</comment>
<comment type="sequence caution" evidence="6">
    <conflict type="erroneous gene model prediction">
        <sequence resource="EMBL-CDS" id="AAD50008"/>
    </conflict>
</comment>
<evidence type="ECO:0000250" key="1">
    <source>
        <dbReference type="UniProtKB" id="Q9Y2G5"/>
    </source>
</evidence>
<evidence type="ECO:0000255" key="2"/>
<evidence type="ECO:0000255" key="3">
    <source>
        <dbReference type="PROSITE-ProRule" id="PRU00498"/>
    </source>
</evidence>
<evidence type="ECO:0000256" key="4">
    <source>
        <dbReference type="SAM" id="MobiDB-lite"/>
    </source>
</evidence>
<evidence type="ECO:0000303" key="5">
    <source>
    </source>
</evidence>
<evidence type="ECO:0000305" key="6"/>
<evidence type="ECO:0000312" key="7">
    <source>
        <dbReference type="Araport" id="AT1G17270"/>
    </source>
</evidence>
<evidence type="ECO:0000312" key="8">
    <source>
        <dbReference type="EMBL" id="AAD50008.1"/>
    </source>
</evidence>
<evidence type="ECO:0000312" key="9">
    <source>
        <dbReference type="EMBL" id="AHL38942.1"/>
    </source>
</evidence>
<gene>
    <name evidence="6" type="primary">OFUT5</name>
    <name evidence="5 9" type="synonym">GT68</name>
    <name evidence="7" type="ordered locus">At1g17270</name>
    <name evidence="8" type="ORF">F20D23.3</name>
</gene>
<name>OFUT5_ARATH</name>
<dbReference type="EC" id="2.4.1.-" evidence="6"/>
<dbReference type="EMBL" id="KJ139002">
    <property type="protein sequence ID" value="AHL38942.1"/>
    <property type="molecule type" value="mRNA"/>
</dbReference>
<dbReference type="EMBL" id="AC007651">
    <property type="protein sequence ID" value="AAD50008.1"/>
    <property type="status" value="ALT_SEQ"/>
    <property type="molecule type" value="Genomic_DNA"/>
</dbReference>
<dbReference type="EMBL" id="CP002684">
    <property type="protein sequence ID" value="AEE29566.1"/>
    <property type="molecule type" value="Genomic_DNA"/>
</dbReference>
<dbReference type="EMBL" id="CP002684">
    <property type="protein sequence ID" value="ANM60393.1"/>
    <property type="molecule type" value="Genomic_DNA"/>
</dbReference>
<dbReference type="EMBL" id="BT002770">
    <property type="protein sequence ID" value="AAO22598.1"/>
    <property type="molecule type" value="mRNA"/>
</dbReference>
<dbReference type="PIR" id="A86309">
    <property type="entry name" value="A86309"/>
</dbReference>
<dbReference type="RefSeq" id="NP_001322684.1">
    <property type="nucleotide sequence ID" value="NM_001332286.1"/>
</dbReference>
<dbReference type="RefSeq" id="NP_173170.2">
    <property type="nucleotide sequence ID" value="NM_101588.4"/>
</dbReference>
<dbReference type="SMR" id="Q84WU0"/>
<dbReference type="FunCoup" id="Q84WU0">
    <property type="interactions" value="1683"/>
</dbReference>
<dbReference type="STRING" id="3702.Q84WU0"/>
<dbReference type="GlyCosmos" id="Q84WU0">
    <property type="glycosylation" value="3 sites, No reported glycans"/>
</dbReference>
<dbReference type="GlyGen" id="Q84WU0">
    <property type="glycosylation" value="3 sites"/>
</dbReference>
<dbReference type="iPTMnet" id="Q84WU0"/>
<dbReference type="PaxDb" id="3702-AT1G17270.1"/>
<dbReference type="ProteomicsDB" id="250801"/>
<dbReference type="EnsemblPlants" id="AT1G17270.1">
    <property type="protein sequence ID" value="AT1G17270.1"/>
    <property type="gene ID" value="AT1G17270"/>
</dbReference>
<dbReference type="EnsemblPlants" id="AT1G17270.2">
    <property type="protein sequence ID" value="AT1G17270.2"/>
    <property type="gene ID" value="AT1G17270"/>
</dbReference>
<dbReference type="GeneID" id="838298"/>
<dbReference type="Gramene" id="AT1G17270.1">
    <property type="protein sequence ID" value="AT1G17270.1"/>
    <property type="gene ID" value="AT1G17270"/>
</dbReference>
<dbReference type="Gramene" id="AT1G17270.2">
    <property type="protein sequence ID" value="AT1G17270.2"/>
    <property type="gene ID" value="AT1G17270"/>
</dbReference>
<dbReference type="KEGG" id="ath:AT1G17270"/>
<dbReference type="Araport" id="AT1G17270"/>
<dbReference type="TAIR" id="AT1G17270"/>
<dbReference type="eggNOG" id="ENOG502QS4M">
    <property type="taxonomic scope" value="Eukaryota"/>
</dbReference>
<dbReference type="HOGENOM" id="CLU_039118_0_0_1"/>
<dbReference type="InParanoid" id="Q84WU0"/>
<dbReference type="OMA" id="CGKVDQS"/>
<dbReference type="PhylomeDB" id="Q84WU0"/>
<dbReference type="PRO" id="PR:Q84WU0"/>
<dbReference type="Proteomes" id="UP000006548">
    <property type="component" value="Chromosome 1"/>
</dbReference>
<dbReference type="ExpressionAtlas" id="Q84WU0">
    <property type="expression patterns" value="baseline and differential"/>
</dbReference>
<dbReference type="GO" id="GO:0016020">
    <property type="term" value="C:membrane"/>
    <property type="evidence" value="ECO:0007669"/>
    <property type="project" value="UniProtKB-SubCell"/>
</dbReference>
<dbReference type="GO" id="GO:0046922">
    <property type="term" value="F:peptide-O-fucosyltransferase activity"/>
    <property type="evidence" value="ECO:0007669"/>
    <property type="project" value="InterPro"/>
</dbReference>
<dbReference type="GO" id="GO:0006004">
    <property type="term" value="P:fucose metabolic process"/>
    <property type="evidence" value="ECO:0007669"/>
    <property type="project" value="UniProtKB-KW"/>
</dbReference>
<dbReference type="CDD" id="cd11296">
    <property type="entry name" value="O-FucT_like"/>
    <property type="match status" value="1"/>
</dbReference>
<dbReference type="FunFam" id="3.40.50.11350:FF:000005">
    <property type="entry name" value="O-fucosyltransferase family protein"/>
    <property type="match status" value="1"/>
</dbReference>
<dbReference type="Gene3D" id="3.40.50.11350">
    <property type="match status" value="1"/>
</dbReference>
<dbReference type="InterPro" id="IPR045130">
    <property type="entry name" value="OFUT2-like"/>
</dbReference>
<dbReference type="PANTHER" id="PTHR13398">
    <property type="entry name" value="GDP-FUCOSE PROTEIN O-FUCOSYLTRANSFERASE 2"/>
    <property type="match status" value="1"/>
</dbReference>
<dbReference type="PANTHER" id="PTHR13398:SF0">
    <property type="entry name" value="GDP-FUCOSE PROTEIN O-FUCOSYLTRANSFERASE 2"/>
    <property type="match status" value="1"/>
</dbReference>
<keyword id="KW-0119">Carbohydrate metabolism</keyword>
<keyword id="KW-0294">Fucose metabolism</keyword>
<keyword id="KW-0325">Glycoprotein</keyword>
<keyword id="KW-0328">Glycosyltransferase</keyword>
<keyword id="KW-0472">Membrane</keyword>
<keyword id="KW-1185">Reference proteome</keyword>
<keyword id="KW-0735">Signal-anchor</keyword>
<keyword id="KW-0808">Transferase</keyword>
<keyword id="KW-0812">Transmembrane</keyword>
<keyword id="KW-1133">Transmembrane helix</keyword>
<organism>
    <name type="scientific">Arabidopsis thaliana</name>
    <name type="common">Mouse-ear cress</name>
    <dbReference type="NCBI Taxonomy" id="3702"/>
    <lineage>
        <taxon>Eukaryota</taxon>
        <taxon>Viridiplantae</taxon>
        <taxon>Streptophyta</taxon>
        <taxon>Embryophyta</taxon>
        <taxon>Tracheophyta</taxon>
        <taxon>Spermatophyta</taxon>
        <taxon>Magnoliopsida</taxon>
        <taxon>eudicotyledons</taxon>
        <taxon>Gunneridae</taxon>
        <taxon>Pentapetalae</taxon>
        <taxon>rosids</taxon>
        <taxon>malvids</taxon>
        <taxon>Brassicales</taxon>
        <taxon>Brassicaceae</taxon>
        <taxon>Camelineae</taxon>
        <taxon>Arabidopsis</taxon>
    </lineage>
</organism>
<accession>Q84WU0</accession>
<accession>Q9SHI5</accession>
<proteinExistence type="evidence at transcript level"/>